<name>BIOD1_HAEDU</name>
<sequence length="278" mass="31444">MFSDKTRNLSRKFDQEHHYTLKKVLKYKQFCNYFVKRKKIPSLFITGTDTNVGKTIVTRAILQVLAQHNFSVVGYKPIACGGDDDLPTEPNQTDYTSEDNSDVLIILDSCPQPVAYRDINSYTFTHSSTPIFAALDAVHHIQEEKLDTDLSNLQQNYPNVVVEGTYGWLTPINKDLSFAEWVHKNNMPAVLVVGIKEGCVNHALLTAQAIQQQGVNLIGWVANRINPCLRHYAELIELLSKKISAPLLGQIPYIAQPHKKDLTSYIENPDPLLAYFQK</sequence>
<reference key="1">
    <citation type="submission" date="2003-06" db="EMBL/GenBank/DDBJ databases">
        <title>The complete genome sequence of Haemophilus ducreyi.</title>
        <authorList>
            <person name="Munson R.S. Jr."/>
            <person name="Ray W.C."/>
            <person name="Mahairas G."/>
            <person name="Sabo P."/>
            <person name="Mungur R."/>
            <person name="Johnson L."/>
            <person name="Nguyen D."/>
            <person name="Wang J."/>
            <person name="Forst C."/>
            <person name="Hood L."/>
        </authorList>
    </citation>
    <scope>NUCLEOTIDE SEQUENCE [LARGE SCALE GENOMIC DNA]</scope>
    <source>
        <strain>35000HP / ATCC 700724</strain>
    </source>
</reference>
<proteinExistence type="inferred from homology"/>
<evidence type="ECO:0000255" key="1">
    <source>
        <dbReference type="HAMAP-Rule" id="MF_00336"/>
    </source>
</evidence>
<organism>
    <name type="scientific">Haemophilus ducreyi (strain 35000HP / ATCC 700724)</name>
    <dbReference type="NCBI Taxonomy" id="233412"/>
    <lineage>
        <taxon>Bacteria</taxon>
        <taxon>Pseudomonadati</taxon>
        <taxon>Pseudomonadota</taxon>
        <taxon>Gammaproteobacteria</taxon>
        <taxon>Pasteurellales</taxon>
        <taxon>Pasteurellaceae</taxon>
        <taxon>Haemophilus</taxon>
    </lineage>
</organism>
<keyword id="KW-0067">ATP-binding</keyword>
<keyword id="KW-0093">Biotin biosynthesis</keyword>
<keyword id="KW-0963">Cytoplasm</keyword>
<keyword id="KW-0436">Ligase</keyword>
<keyword id="KW-0460">Magnesium</keyword>
<keyword id="KW-0479">Metal-binding</keyword>
<keyword id="KW-0547">Nucleotide-binding</keyword>
<keyword id="KW-1185">Reference proteome</keyword>
<gene>
    <name evidence="1" type="primary">bioD1</name>
    <name type="ordered locus">HD_1480</name>
</gene>
<accession>Q7VLG6</accession>
<comment type="function">
    <text evidence="1">Catalyzes a mechanistically unusual reaction, the ATP-dependent insertion of CO2 between the N7 and N8 nitrogen atoms of 7,8-diaminopelargonic acid (DAPA, also called 7,8-diammoniononanoate) to form a ureido ring.</text>
</comment>
<comment type="catalytic activity">
    <reaction evidence="1">
        <text>(7R,8S)-7,8-diammoniononanoate + CO2 + ATP = (4R,5S)-dethiobiotin + ADP + phosphate + 3 H(+)</text>
        <dbReference type="Rhea" id="RHEA:15805"/>
        <dbReference type="ChEBI" id="CHEBI:15378"/>
        <dbReference type="ChEBI" id="CHEBI:16526"/>
        <dbReference type="ChEBI" id="CHEBI:30616"/>
        <dbReference type="ChEBI" id="CHEBI:43474"/>
        <dbReference type="ChEBI" id="CHEBI:149469"/>
        <dbReference type="ChEBI" id="CHEBI:149473"/>
        <dbReference type="ChEBI" id="CHEBI:456216"/>
        <dbReference type="EC" id="6.3.3.3"/>
    </reaction>
</comment>
<comment type="cofactor">
    <cofactor evidence="1">
        <name>Mg(2+)</name>
        <dbReference type="ChEBI" id="CHEBI:18420"/>
    </cofactor>
</comment>
<comment type="pathway">
    <text evidence="1">Cofactor biosynthesis; biotin biosynthesis; biotin from 7,8-diaminononanoate: step 1/2.</text>
</comment>
<comment type="subunit">
    <text evidence="1">Homodimer.</text>
</comment>
<comment type="subcellular location">
    <subcellularLocation>
        <location evidence="1">Cytoplasm</location>
    </subcellularLocation>
</comment>
<comment type="similarity">
    <text evidence="1">Belongs to the dethiobiotin synthetase family.</text>
</comment>
<feature type="chain" id="PRO_0000187967" description="ATP-dependent dethiobiotin synthetase BioD 1">
    <location>
        <begin position="1"/>
        <end position="278"/>
    </location>
</feature>
<feature type="active site" evidence="1">
    <location>
        <position position="76"/>
    </location>
</feature>
<feature type="binding site" evidence="1">
    <location>
        <begin position="51"/>
        <end position="56"/>
    </location>
    <ligand>
        <name>ATP</name>
        <dbReference type="ChEBI" id="CHEBI:30616"/>
    </ligand>
</feature>
<feature type="binding site" evidence="1">
    <location>
        <position position="55"/>
    </location>
    <ligand>
        <name>Mg(2+)</name>
        <dbReference type="ChEBI" id="CHEBI:18420"/>
    </ligand>
</feature>
<feature type="binding site" evidence="1">
    <location>
        <position position="102"/>
    </location>
    <ligand>
        <name>ATP</name>
        <dbReference type="ChEBI" id="CHEBI:30616"/>
    </ligand>
</feature>
<feature type="binding site" evidence="1">
    <location>
        <position position="102"/>
    </location>
    <ligand>
        <name>Mg(2+)</name>
        <dbReference type="ChEBI" id="CHEBI:18420"/>
    </ligand>
</feature>
<feature type="binding site" evidence="1">
    <location>
        <position position="163"/>
    </location>
    <ligand>
        <name>Mg(2+)</name>
        <dbReference type="ChEBI" id="CHEBI:18420"/>
    </ligand>
</feature>
<feature type="binding site" evidence="1">
    <location>
        <begin position="223"/>
        <end position="224"/>
    </location>
    <ligand>
        <name>ATP</name>
        <dbReference type="ChEBI" id="CHEBI:30616"/>
    </ligand>
</feature>
<feature type="binding site" evidence="1">
    <location>
        <begin position="252"/>
        <end position="254"/>
    </location>
    <ligand>
        <name>ATP</name>
        <dbReference type="ChEBI" id="CHEBI:30616"/>
    </ligand>
</feature>
<protein>
    <recommendedName>
        <fullName evidence="1">ATP-dependent dethiobiotin synthetase BioD 1</fullName>
        <ecNumber evidence="1">6.3.3.3</ecNumber>
    </recommendedName>
    <alternativeName>
        <fullName evidence="1">DTB synthetase 1</fullName>
        <shortName evidence="1">DTBS 1</shortName>
    </alternativeName>
    <alternativeName>
        <fullName evidence="1">Dethiobiotin synthase 1</fullName>
    </alternativeName>
</protein>
<dbReference type="EC" id="6.3.3.3" evidence="1"/>
<dbReference type="EMBL" id="AE017143">
    <property type="protein sequence ID" value="AAP96282.1"/>
    <property type="molecule type" value="Genomic_DNA"/>
</dbReference>
<dbReference type="SMR" id="Q7VLG6"/>
<dbReference type="STRING" id="233412.HD_1480"/>
<dbReference type="KEGG" id="hdu:HD_1480"/>
<dbReference type="eggNOG" id="COG0132">
    <property type="taxonomic scope" value="Bacteria"/>
</dbReference>
<dbReference type="HOGENOM" id="CLU_072551_0_0_6"/>
<dbReference type="UniPathway" id="UPA00078">
    <property type="reaction ID" value="UER00161"/>
</dbReference>
<dbReference type="Proteomes" id="UP000001022">
    <property type="component" value="Chromosome"/>
</dbReference>
<dbReference type="GO" id="GO:0005829">
    <property type="term" value="C:cytosol"/>
    <property type="evidence" value="ECO:0007669"/>
    <property type="project" value="TreeGrafter"/>
</dbReference>
<dbReference type="GO" id="GO:0005524">
    <property type="term" value="F:ATP binding"/>
    <property type="evidence" value="ECO:0007669"/>
    <property type="project" value="UniProtKB-UniRule"/>
</dbReference>
<dbReference type="GO" id="GO:0004141">
    <property type="term" value="F:dethiobiotin synthase activity"/>
    <property type="evidence" value="ECO:0007669"/>
    <property type="project" value="UniProtKB-UniRule"/>
</dbReference>
<dbReference type="GO" id="GO:0000287">
    <property type="term" value="F:magnesium ion binding"/>
    <property type="evidence" value="ECO:0007669"/>
    <property type="project" value="UniProtKB-UniRule"/>
</dbReference>
<dbReference type="GO" id="GO:0009102">
    <property type="term" value="P:biotin biosynthetic process"/>
    <property type="evidence" value="ECO:0007669"/>
    <property type="project" value="UniProtKB-UniRule"/>
</dbReference>
<dbReference type="CDD" id="cd03109">
    <property type="entry name" value="DTBS"/>
    <property type="match status" value="1"/>
</dbReference>
<dbReference type="FunFam" id="3.40.50.300:FF:000292">
    <property type="entry name" value="ATP-dependent dethiobiotin synthetase BioD"/>
    <property type="match status" value="1"/>
</dbReference>
<dbReference type="Gene3D" id="3.40.50.300">
    <property type="entry name" value="P-loop containing nucleotide triphosphate hydrolases"/>
    <property type="match status" value="1"/>
</dbReference>
<dbReference type="HAMAP" id="MF_00336">
    <property type="entry name" value="BioD"/>
    <property type="match status" value="1"/>
</dbReference>
<dbReference type="InterPro" id="IPR004472">
    <property type="entry name" value="DTB_synth_BioD"/>
</dbReference>
<dbReference type="InterPro" id="IPR027417">
    <property type="entry name" value="P-loop_NTPase"/>
</dbReference>
<dbReference type="NCBIfam" id="TIGR00347">
    <property type="entry name" value="bioD"/>
    <property type="match status" value="1"/>
</dbReference>
<dbReference type="PANTHER" id="PTHR43210">
    <property type="entry name" value="DETHIOBIOTIN SYNTHETASE"/>
    <property type="match status" value="1"/>
</dbReference>
<dbReference type="PANTHER" id="PTHR43210:SF5">
    <property type="entry name" value="DETHIOBIOTIN SYNTHETASE"/>
    <property type="match status" value="1"/>
</dbReference>
<dbReference type="Pfam" id="PF13500">
    <property type="entry name" value="AAA_26"/>
    <property type="match status" value="1"/>
</dbReference>
<dbReference type="SUPFAM" id="SSF52540">
    <property type="entry name" value="P-loop containing nucleoside triphosphate hydrolases"/>
    <property type="match status" value="1"/>
</dbReference>